<reference key="1">
    <citation type="submission" date="2007-10" db="EMBL/GenBank/DDBJ databases">
        <title>Brucella canis ATCC 23365 whole genome shotgun sequencing project.</title>
        <authorList>
            <person name="Setubal J.C."/>
            <person name="Bowns C."/>
            <person name="Boyle S."/>
            <person name="Crasta O.R."/>
            <person name="Czar M.J."/>
            <person name="Dharmanolla C."/>
            <person name="Gillespie J.J."/>
            <person name="Kenyon R.W."/>
            <person name="Lu J."/>
            <person name="Mane S."/>
            <person name="Mohapatra S."/>
            <person name="Nagrani S."/>
            <person name="Purkayastha A."/>
            <person name="Rajasimha H.K."/>
            <person name="Shallom J.M."/>
            <person name="Shallom S."/>
            <person name="Shukla M."/>
            <person name="Snyder E.E."/>
            <person name="Sobral B.W."/>
            <person name="Wattam A.R."/>
            <person name="Will R."/>
            <person name="Williams K."/>
            <person name="Yoo H."/>
            <person name="Bruce D."/>
            <person name="Detter C."/>
            <person name="Munk C."/>
            <person name="Brettin T.S."/>
        </authorList>
    </citation>
    <scope>NUCLEOTIDE SEQUENCE [LARGE SCALE GENOMIC DNA]</scope>
    <source>
        <strain>ATCC 23365 / NCTC 10854 / RM-666</strain>
    </source>
</reference>
<dbReference type="EC" id="2.7.13.3"/>
<dbReference type="EMBL" id="CP000873">
    <property type="protein sequence ID" value="ABX63765.1"/>
    <property type="status" value="ALT_INIT"/>
    <property type="molecule type" value="Genomic_DNA"/>
</dbReference>
<dbReference type="RefSeq" id="WP_002971240.1">
    <property type="nucleotide sequence ID" value="NC_010104.1"/>
</dbReference>
<dbReference type="SMR" id="A9MBM8"/>
<dbReference type="KEGG" id="bcs:BCAN_B0589"/>
<dbReference type="HOGENOM" id="CLU_000445_114_57_5"/>
<dbReference type="Proteomes" id="UP000001385">
    <property type="component" value="Chromosome II"/>
</dbReference>
<dbReference type="GO" id="GO:0005524">
    <property type="term" value="F:ATP binding"/>
    <property type="evidence" value="ECO:0007669"/>
    <property type="project" value="UniProtKB-KW"/>
</dbReference>
<dbReference type="GO" id="GO:0009881">
    <property type="term" value="F:photoreceptor activity"/>
    <property type="evidence" value="ECO:0007669"/>
    <property type="project" value="UniProtKB-KW"/>
</dbReference>
<dbReference type="GO" id="GO:0004673">
    <property type="term" value="F:protein histidine kinase activity"/>
    <property type="evidence" value="ECO:0007669"/>
    <property type="project" value="UniProtKB-EC"/>
</dbReference>
<dbReference type="CDD" id="cd00130">
    <property type="entry name" value="PAS"/>
    <property type="match status" value="2"/>
</dbReference>
<dbReference type="Gene3D" id="2.10.70.100">
    <property type="match status" value="1"/>
</dbReference>
<dbReference type="Gene3D" id="3.30.450.20">
    <property type="entry name" value="PAS domain"/>
    <property type="match status" value="2"/>
</dbReference>
<dbReference type="InterPro" id="IPR001610">
    <property type="entry name" value="PAC"/>
</dbReference>
<dbReference type="InterPro" id="IPR000014">
    <property type="entry name" value="PAS"/>
</dbReference>
<dbReference type="InterPro" id="IPR000700">
    <property type="entry name" value="PAS-assoc_C"/>
</dbReference>
<dbReference type="InterPro" id="IPR035965">
    <property type="entry name" value="PAS-like_dom_sf"/>
</dbReference>
<dbReference type="InterPro" id="IPR013655">
    <property type="entry name" value="PAS_fold_3"/>
</dbReference>
<dbReference type="InterPro" id="IPR011102">
    <property type="entry name" value="Sig_transdc_His_kinase_HWE"/>
</dbReference>
<dbReference type="NCBIfam" id="TIGR00229">
    <property type="entry name" value="sensory_box"/>
    <property type="match status" value="2"/>
</dbReference>
<dbReference type="PANTHER" id="PTHR41523:SF7">
    <property type="entry name" value="HISTIDINE KINASE"/>
    <property type="match status" value="1"/>
</dbReference>
<dbReference type="PANTHER" id="PTHR41523">
    <property type="entry name" value="TWO-COMPONENT SYSTEM SENSOR PROTEIN"/>
    <property type="match status" value="1"/>
</dbReference>
<dbReference type="Pfam" id="PF07536">
    <property type="entry name" value="HWE_HK"/>
    <property type="match status" value="1"/>
</dbReference>
<dbReference type="Pfam" id="PF08447">
    <property type="entry name" value="PAS_3"/>
    <property type="match status" value="1"/>
</dbReference>
<dbReference type="Pfam" id="PF13426">
    <property type="entry name" value="PAS_9"/>
    <property type="match status" value="1"/>
</dbReference>
<dbReference type="SMART" id="SM00911">
    <property type="entry name" value="HWE_HK"/>
    <property type="match status" value="1"/>
</dbReference>
<dbReference type="SMART" id="SM00086">
    <property type="entry name" value="PAC"/>
    <property type="match status" value="2"/>
</dbReference>
<dbReference type="SMART" id="SM00091">
    <property type="entry name" value="PAS"/>
    <property type="match status" value="2"/>
</dbReference>
<dbReference type="SUPFAM" id="SSF55785">
    <property type="entry name" value="PYP-like sensor domain (PAS domain)"/>
    <property type="match status" value="2"/>
</dbReference>
<dbReference type="PROSITE" id="PS50113">
    <property type="entry name" value="PAC"/>
    <property type="match status" value="2"/>
</dbReference>
<dbReference type="PROSITE" id="PS50112">
    <property type="entry name" value="PAS"/>
    <property type="match status" value="1"/>
</dbReference>
<feature type="chain" id="PRO_0000361284" description="Blue-light-activated histidine kinase">
    <location>
        <begin position="1"/>
        <end position="489"/>
    </location>
</feature>
<feature type="domain" description="PAS" evidence="2">
    <location>
        <begin position="19"/>
        <end position="93"/>
    </location>
</feature>
<feature type="domain" description="PAC 1" evidence="3">
    <location>
        <begin position="93"/>
        <end position="147"/>
    </location>
</feature>
<feature type="domain" description="PAC 2" evidence="3">
    <location>
        <begin position="232"/>
        <end position="281"/>
    </location>
</feature>
<feature type="region of interest" description="HWE histidine kinase domain">
    <location>
        <begin position="285"/>
        <end position="367"/>
    </location>
</feature>
<feature type="modified residue" description="S-4a-FMN cysteine" evidence="1">
    <location>
        <position position="69"/>
    </location>
</feature>
<feature type="modified residue" description="Phosphohistidine; by autocatalysis" evidence="1">
    <location>
        <position position="288"/>
    </location>
</feature>
<protein>
    <recommendedName>
        <fullName>Blue-light-activated histidine kinase</fullName>
        <ecNumber>2.7.13.3</ecNumber>
    </recommendedName>
</protein>
<evidence type="ECO:0000250" key="1"/>
<evidence type="ECO:0000255" key="2">
    <source>
        <dbReference type="PROSITE-ProRule" id="PRU00140"/>
    </source>
</evidence>
<evidence type="ECO:0000255" key="3">
    <source>
        <dbReference type="PROSITE-ProRule" id="PRU00141"/>
    </source>
</evidence>
<evidence type="ECO:0000305" key="4"/>
<name>LOVHK_BRUC2</name>
<comment type="function">
    <text evidence="1">Photosensitive kinase that is involved in increased bacterial virulence upon exposure to light. Once ejected from an infected animal host, sunlight acts as an environmental signal that increases the virulence of the bacterium, preparing it for infection of the next host. This photoreceptor protein is directly related to the bacterium's survival and replication within host macrophages (By similarity).</text>
</comment>
<comment type="catalytic activity">
    <reaction>
        <text>ATP + protein L-histidine = ADP + protein N-phospho-L-histidine.</text>
        <dbReference type="EC" id="2.7.13.3"/>
    </reaction>
</comment>
<comment type="PTM">
    <text evidence="1">FMN binds covalently to cysteine after exposure to blue light and this bond is spontaneously broken in the dark.</text>
</comment>
<comment type="sequence caution" evidence="4">
    <conflict type="erroneous initiation">
        <sequence resource="EMBL-CDS" id="ABX63765"/>
    </conflict>
</comment>
<keyword id="KW-0067">ATP-binding</keyword>
<keyword id="KW-0157">Chromophore</keyword>
<keyword id="KW-0285">Flavoprotein</keyword>
<keyword id="KW-0288">FMN</keyword>
<keyword id="KW-0418">Kinase</keyword>
<keyword id="KW-0547">Nucleotide-binding</keyword>
<keyword id="KW-0597">Phosphoprotein</keyword>
<keyword id="KW-0600">Photoreceptor protein</keyword>
<keyword id="KW-0675">Receptor</keyword>
<keyword id="KW-1185">Reference proteome</keyword>
<keyword id="KW-0677">Repeat</keyword>
<keyword id="KW-0716">Sensory transduction</keyword>
<keyword id="KW-0808">Transferase</keyword>
<keyword id="KW-0843">Virulence</keyword>
<sequence>MAIDLRPFIPFGRGALSQATDPFRAAVEFTLMPMLITNPHLPDNPIVFANPAFLKLTGYEADEVMGRNCRFLQGHGTDPAHVRAIKSAIAAEKPIDIDIINYKKSGEAFWNRLHISPVHNANGRLQHFVSSQLDVTLELSRLVELEKERKTLSIETARSKDQLDYIVEVANIGFWTREFYSGKMTCSAECRRIYGFTPDEPVHFDTILDLVVLEDRMTVVQKAHQAVTGEPYSIEYRIVTRLGETRWLETRAKALTGENPLVLGIVQDVTERKKAEANKALVSREIAHRFKNSMAMVQSIANQTLRNTYDPEQANRLFSERLRALSQAHDMLLKENWAGATIQQICATALAPFNSTFANRIHMSGPHLLVSDRVTVALSLAFYELATNAVKYGALSNEKGVINITWAIMEDKGEKKFHMRWAESRGPEVMQPARRGFGQRLLHSVLAEELKAKCDVEFAASGLLIDVLAPITPEVFPGMGHNVPEQRIA</sequence>
<organism>
    <name type="scientific">Brucella canis (strain ATCC 23365 / NCTC 10854 / RM-666)</name>
    <dbReference type="NCBI Taxonomy" id="483179"/>
    <lineage>
        <taxon>Bacteria</taxon>
        <taxon>Pseudomonadati</taxon>
        <taxon>Pseudomonadota</taxon>
        <taxon>Alphaproteobacteria</taxon>
        <taxon>Hyphomicrobiales</taxon>
        <taxon>Brucellaceae</taxon>
        <taxon>Brucella/Ochrobactrum group</taxon>
        <taxon>Brucella</taxon>
    </lineage>
</organism>
<accession>A9MBM8</accession>
<proteinExistence type="inferred from homology"/>
<gene>
    <name type="ordered locus">BCAN_B0589</name>
</gene>